<proteinExistence type="inferred from homology"/>
<gene>
    <name evidence="1" type="primary">rpsP</name>
    <name type="ordered locus">NMC0534</name>
</gene>
<sequence>MVVIRLARGGSKHRPFYNVIVTDSRSRRDGRFIERVGFYNPVANEKQERVRLNADRLNHWIAQGAQVSDSVAKLIKEQKAA</sequence>
<dbReference type="EMBL" id="AM421808">
    <property type="protein sequence ID" value="CAM09831.1"/>
    <property type="molecule type" value="Genomic_DNA"/>
</dbReference>
<dbReference type="RefSeq" id="WP_002214315.1">
    <property type="nucleotide sequence ID" value="NC_008767.1"/>
</dbReference>
<dbReference type="SMR" id="A1KSK1"/>
<dbReference type="GeneID" id="93386578"/>
<dbReference type="KEGG" id="nmc:NMC0534"/>
<dbReference type="HOGENOM" id="CLU_100590_5_1_4"/>
<dbReference type="Proteomes" id="UP000002286">
    <property type="component" value="Chromosome"/>
</dbReference>
<dbReference type="GO" id="GO:0005737">
    <property type="term" value="C:cytoplasm"/>
    <property type="evidence" value="ECO:0007669"/>
    <property type="project" value="UniProtKB-ARBA"/>
</dbReference>
<dbReference type="GO" id="GO:0015935">
    <property type="term" value="C:small ribosomal subunit"/>
    <property type="evidence" value="ECO:0007669"/>
    <property type="project" value="TreeGrafter"/>
</dbReference>
<dbReference type="GO" id="GO:0003735">
    <property type="term" value="F:structural constituent of ribosome"/>
    <property type="evidence" value="ECO:0007669"/>
    <property type="project" value="InterPro"/>
</dbReference>
<dbReference type="GO" id="GO:0006412">
    <property type="term" value="P:translation"/>
    <property type="evidence" value="ECO:0007669"/>
    <property type="project" value="UniProtKB-UniRule"/>
</dbReference>
<dbReference type="FunFam" id="3.30.1320.10:FF:000001">
    <property type="entry name" value="30S ribosomal protein S16"/>
    <property type="match status" value="1"/>
</dbReference>
<dbReference type="Gene3D" id="3.30.1320.10">
    <property type="match status" value="1"/>
</dbReference>
<dbReference type="HAMAP" id="MF_00385">
    <property type="entry name" value="Ribosomal_bS16"/>
    <property type="match status" value="1"/>
</dbReference>
<dbReference type="InterPro" id="IPR000307">
    <property type="entry name" value="Ribosomal_bS16"/>
</dbReference>
<dbReference type="InterPro" id="IPR023803">
    <property type="entry name" value="Ribosomal_bS16_dom_sf"/>
</dbReference>
<dbReference type="NCBIfam" id="TIGR00002">
    <property type="entry name" value="S16"/>
    <property type="match status" value="1"/>
</dbReference>
<dbReference type="PANTHER" id="PTHR12919">
    <property type="entry name" value="30S RIBOSOMAL PROTEIN S16"/>
    <property type="match status" value="1"/>
</dbReference>
<dbReference type="PANTHER" id="PTHR12919:SF20">
    <property type="entry name" value="SMALL RIBOSOMAL SUBUNIT PROTEIN BS16M"/>
    <property type="match status" value="1"/>
</dbReference>
<dbReference type="Pfam" id="PF00886">
    <property type="entry name" value="Ribosomal_S16"/>
    <property type="match status" value="1"/>
</dbReference>
<dbReference type="SUPFAM" id="SSF54565">
    <property type="entry name" value="Ribosomal protein S16"/>
    <property type="match status" value="1"/>
</dbReference>
<accession>A1KSK1</accession>
<reference key="1">
    <citation type="journal article" date="2007" name="PLoS Genet.">
        <title>Meningococcal genetic variation mechanisms viewed through comparative analysis of serogroup C strain FAM18.</title>
        <authorList>
            <person name="Bentley S.D."/>
            <person name="Vernikos G.S."/>
            <person name="Snyder L.A.S."/>
            <person name="Churcher C."/>
            <person name="Arrowsmith C."/>
            <person name="Chillingworth T."/>
            <person name="Cronin A."/>
            <person name="Davis P.H."/>
            <person name="Holroyd N.E."/>
            <person name="Jagels K."/>
            <person name="Maddison M."/>
            <person name="Moule S."/>
            <person name="Rabbinowitsch E."/>
            <person name="Sharp S."/>
            <person name="Unwin L."/>
            <person name="Whitehead S."/>
            <person name="Quail M.A."/>
            <person name="Achtman M."/>
            <person name="Barrell B.G."/>
            <person name="Saunders N.J."/>
            <person name="Parkhill J."/>
        </authorList>
    </citation>
    <scope>NUCLEOTIDE SEQUENCE [LARGE SCALE GENOMIC DNA]</scope>
    <source>
        <strain>ATCC 700532 / DSM 15464 / FAM18</strain>
    </source>
</reference>
<name>RS16_NEIMF</name>
<keyword id="KW-0687">Ribonucleoprotein</keyword>
<keyword id="KW-0689">Ribosomal protein</keyword>
<organism>
    <name type="scientific">Neisseria meningitidis serogroup C / serotype 2a (strain ATCC 700532 / DSM 15464 / FAM18)</name>
    <dbReference type="NCBI Taxonomy" id="272831"/>
    <lineage>
        <taxon>Bacteria</taxon>
        <taxon>Pseudomonadati</taxon>
        <taxon>Pseudomonadota</taxon>
        <taxon>Betaproteobacteria</taxon>
        <taxon>Neisseriales</taxon>
        <taxon>Neisseriaceae</taxon>
        <taxon>Neisseria</taxon>
    </lineage>
</organism>
<evidence type="ECO:0000255" key="1">
    <source>
        <dbReference type="HAMAP-Rule" id="MF_00385"/>
    </source>
</evidence>
<evidence type="ECO:0000305" key="2"/>
<protein>
    <recommendedName>
        <fullName evidence="1">Small ribosomal subunit protein bS16</fullName>
    </recommendedName>
    <alternativeName>
        <fullName evidence="2">30S ribosomal protein S16</fullName>
    </alternativeName>
</protein>
<comment type="similarity">
    <text evidence="1">Belongs to the bacterial ribosomal protein bS16 family.</text>
</comment>
<feature type="chain" id="PRO_1000049300" description="Small ribosomal subunit protein bS16">
    <location>
        <begin position="1"/>
        <end position="81"/>
    </location>
</feature>